<accession>A4VHN1</accession>
<protein>
    <recommendedName>
        <fullName evidence="1">Large ribosomal subunit protein uL4</fullName>
    </recommendedName>
    <alternativeName>
        <fullName evidence="3">50S ribosomal protein L4</fullName>
    </alternativeName>
</protein>
<keyword id="KW-1185">Reference proteome</keyword>
<keyword id="KW-0687">Ribonucleoprotein</keyword>
<keyword id="KW-0689">Ribosomal protein</keyword>
<keyword id="KW-0694">RNA-binding</keyword>
<keyword id="KW-0699">rRNA-binding</keyword>
<dbReference type="EMBL" id="CP000304">
    <property type="protein sequence ID" value="ABP78482.1"/>
    <property type="molecule type" value="Genomic_DNA"/>
</dbReference>
<dbReference type="RefSeq" id="WP_011911988.1">
    <property type="nucleotide sequence ID" value="NC_009434.1"/>
</dbReference>
<dbReference type="SMR" id="A4VHN1"/>
<dbReference type="GeneID" id="66819927"/>
<dbReference type="KEGG" id="psa:PST_0785"/>
<dbReference type="eggNOG" id="COG0088">
    <property type="taxonomic scope" value="Bacteria"/>
</dbReference>
<dbReference type="HOGENOM" id="CLU_041575_5_2_6"/>
<dbReference type="Proteomes" id="UP000000233">
    <property type="component" value="Chromosome"/>
</dbReference>
<dbReference type="GO" id="GO:1990904">
    <property type="term" value="C:ribonucleoprotein complex"/>
    <property type="evidence" value="ECO:0007669"/>
    <property type="project" value="UniProtKB-KW"/>
</dbReference>
<dbReference type="GO" id="GO:0005840">
    <property type="term" value="C:ribosome"/>
    <property type="evidence" value="ECO:0007669"/>
    <property type="project" value="UniProtKB-KW"/>
</dbReference>
<dbReference type="GO" id="GO:0019843">
    <property type="term" value="F:rRNA binding"/>
    <property type="evidence" value="ECO:0007669"/>
    <property type="project" value="UniProtKB-UniRule"/>
</dbReference>
<dbReference type="GO" id="GO:0003735">
    <property type="term" value="F:structural constituent of ribosome"/>
    <property type="evidence" value="ECO:0007669"/>
    <property type="project" value="InterPro"/>
</dbReference>
<dbReference type="GO" id="GO:0006412">
    <property type="term" value="P:translation"/>
    <property type="evidence" value="ECO:0007669"/>
    <property type="project" value="UniProtKB-UniRule"/>
</dbReference>
<dbReference type="FunFam" id="3.40.1370.10:FF:000001">
    <property type="entry name" value="50S ribosomal protein L4"/>
    <property type="match status" value="1"/>
</dbReference>
<dbReference type="Gene3D" id="3.40.1370.10">
    <property type="match status" value="1"/>
</dbReference>
<dbReference type="HAMAP" id="MF_01328_B">
    <property type="entry name" value="Ribosomal_uL4_B"/>
    <property type="match status" value="1"/>
</dbReference>
<dbReference type="InterPro" id="IPR002136">
    <property type="entry name" value="Ribosomal_uL4"/>
</dbReference>
<dbReference type="InterPro" id="IPR013005">
    <property type="entry name" value="Ribosomal_uL4-like"/>
</dbReference>
<dbReference type="InterPro" id="IPR023574">
    <property type="entry name" value="Ribosomal_uL4_dom_sf"/>
</dbReference>
<dbReference type="NCBIfam" id="TIGR03953">
    <property type="entry name" value="rplD_bact"/>
    <property type="match status" value="1"/>
</dbReference>
<dbReference type="PANTHER" id="PTHR10746">
    <property type="entry name" value="50S RIBOSOMAL PROTEIN L4"/>
    <property type="match status" value="1"/>
</dbReference>
<dbReference type="PANTHER" id="PTHR10746:SF6">
    <property type="entry name" value="LARGE RIBOSOMAL SUBUNIT PROTEIN UL4M"/>
    <property type="match status" value="1"/>
</dbReference>
<dbReference type="Pfam" id="PF00573">
    <property type="entry name" value="Ribosomal_L4"/>
    <property type="match status" value="1"/>
</dbReference>
<dbReference type="SUPFAM" id="SSF52166">
    <property type="entry name" value="Ribosomal protein L4"/>
    <property type="match status" value="1"/>
</dbReference>
<comment type="function">
    <text evidence="1">One of the primary rRNA binding proteins, this protein initially binds near the 5'-end of the 23S rRNA. It is important during the early stages of 50S assembly. It makes multiple contacts with different domains of the 23S rRNA in the assembled 50S subunit and ribosome.</text>
</comment>
<comment type="function">
    <text evidence="1">Forms part of the polypeptide exit tunnel.</text>
</comment>
<comment type="subunit">
    <text evidence="1">Part of the 50S ribosomal subunit.</text>
</comment>
<comment type="similarity">
    <text evidence="1">Belongs to the universal ribosomal protein uL4 family.</text>
</comment>
<reference key="1">
    <citation type="journal article" date="2008" name="Proc. Natl. Acad. Sci. U.S.A.">
        <title>Nitrogen fixation island and rhizosphere competence traits in the genome of root-associated Pseudomonas stutzeri A1501.</title>
        <authorList>
            <person name="Yan Y."/>
            <person name="Yang J."/>
            <person name="Dou Y."/>
            <person name="Chen M."/>
            <person name="Ping S."/>
            <person name="Peng J."/>
            <person name="Lu W."/>
            <person name="Zhang W."/>
            <person name="Yao Z."/>
            <person name="Li H."/>
            <person name="Liu W."/>
            <person name="He S."/>
            <person name="Geng L."/>
            <person name="Zhang X."/>
            <person name="Yang F."/>
            <person name="Yu H."/>
            <person name="Zhan Y."/>
            <person name="Li D."/>
            <person name="Lin Z."/>
            <person name="Wang Y."/>
            <person name="Elmerich C."/>
            <person name="Lin M."/>
            <person name="Jin Q."/>
        </authorList>
    </citation>
    <scope>NUCLEOTIDE SEQUENCE [LARGE SCALE GENOMIC DNA]</scope>
    <source>
        <strain>A1501</strain>
    </source>
</reference>
<feature type="chain" id="PRO_1000052474" description="Large ribosomal subunit protein uL4">
    <location>
        <begin position="1"/>
        <end position="200"/>
    </location>
</feature>
<feature type="region of interest" description="Disordered" evidence="2">
    <location>
        <begin position="38"/>
        <end position="80"/>
    </location>
</feature>
<sequence>MQLNVNGAQAIEVSDRTFGGEFNETLVHQAVVAYMAGGRQGSKQQKTRSDVSGGGKRPWRQKGTGRARAGTTRGPIWRGGGVTFAARPQNHEQKLNKKMYRAALRSILAELVRSERLVVVEDFAVDAPKTKALASKLNGMGLSDVLIVSDAVDQNLYLAARNLPHVDVRDVQGSDPVSLIAYDKVLITVSAVKKFEELLG</sequence>
<evidence type="ECO:0000255" key="1">
    <source>
        <dbReference type="HAMAP-Rule" id="MF_01328"/>
    </source>
</evidence>
<evidence type="ECO:0000256" key="2">
    <source>
        <dbReference type="SAM" id="MobiDB-lite"/>
    </source>
</evidence>
<evidence type="ECO:0000305" key="3"/>
<proteinExistence type="inferred from homology"/>
<gene>
    <name evidence="1" type="primary">rplD</name>
    <name type="ordered locus">PST_0785</name>
</gene>
<organism>
    <name type="scientific">Stutzerimonas stutzeri (strain A1501)</name>
    <name type="common">Pseudomonas stutzeri</name>
    <dbReference type="NCBI Taxonomy" id="379731"/>
    <lineage>
        <taxon>Bacteria</taxon>
        <taxon>Pseudomonadati</taxon>
        <taxon>Pseudomonadota</taxon>
        <taxon>Gammaproteobacteria</taxon>
        <taxon>Pseudomonadales</taxon>
        <taxon>Pseudomonadaceae</taxon>
        <taxon>Stutzerimonas</taxon>
    </lineage>
</organism>
<name>RL4_STUS1</name>